<dbReference type="PIR" id="JC0002">
    <property type="entry name" value="XAVIBH"/>
</dbReference>
<dbReference type="GO" id="GO:0005576">
    <property type="term" value="C:extracellular region"/>
    <property type="evidence" value="ECO:0007669"/>
    <property type="project" value="UniProtKB-SubCell"/>
</dbReference>
<dbReference type="GO" id="GO:0030414">
    <property type="term" value="F:peptidase inhibitor activity"/>
    <property type="evidence" value="ECO:0007669"/>
    <property type="project" value="UniProtKB-KW"/>
</dbReference>
<dbReference type="GO" id="GO:0090729">
    <property type="term" value="F:toxin activity"/>
    <property type="evidence" value="ECO:0007669"/>
    <property type="project" value="UniProtKB-KW"/>
</dbReference>
<dbReference type="GO" id="GO:0008217">
    <property type="term" value="P:regulation of blood pressure"/>
    <property type="evidence" value="ECO:0007669"/>
    <property type="project" value="UniProtKB-KW"/>
</dbReference>
<proteinExistence type="evidence at protein level"/>
<accession>P04562</accession>
<organism>
    <name type="scientific">Gloydius halys</name>
    <name type="common">Chinese water mocassin</name>
    <name type="synonym">Agkistrodon halys</name>
    <dbReference type="NCBI Taxonomy" id="8714"/>
    <lineage>
        <taxon>Eukaryota</taxon>
        <taxon>Metazoa</taxon>
        <taxon>Chordata</taxon>
        <taxon>Craniata</taxon>
        <taxon>Vertebrata</taxon>
        <taxon>Euteleostomi</taxon>
        <taxon>Lepidosauria</taxon>
        <taxon>Squamata</taxon>
        <taxon>Bifurcata</taxon>
        <taxon>Unidentata</taxon>
        <taxon>Episquamata</taxon>
        <taxon>Toxicofera</taxon>
        <taxon>Serpentes</taxon>
        <taxon>Colubroidea</taxon>
        <taxon>Viperidae</taxon>
        <taxon>Crotalinae</taxon>
        <taxon>Gloydius</taxon>
    </lineage>
</organism>
<feature type="peptide" id="PRO_0000043506" description="Bradykinin-potentiating peptide 1">
    <location>
        <begin position="1"/>
        <end position="11"/>
    </location>
</feature>
<feature type="modified residue" description="Pyrrolidone carboxylic acid" evidence="1">
    <location>
        <position position="1"/>
    </location>
</feature>
<sequence length="11" mass="1112">QGRPPGPPIPP</sequence>
<protein>
    <recommendedName>
        <fullName>Bradykinin-potentiating peptide 1</fullName>
        <shortName>BPP-1</shortName>
    </recommendedName>
    <alternativeName>
        <fullName>Angiotensin-converting enzyme inhibitor 1</fullName>
    </alternativeName>
</protein>
<name>BPP1_GLOHA</name>
<reference key="1">
    <citation type="journal article" date="1985" name="Peptides 6 Suppl.">
        <title>Structure-function studies on the bradykinin potentiating peptide from Chinese snake venom (Agkistrodon halys pallas).</title>
        <authorList>
            <person name="Chi C.-W."/>
            <person name="Wang S.-Z."/>
            <person name="Xu L.-G."/>
            <person name="Wang M.-Y."/>
            <person name="Lo S.-S."/>
            <person name="Huang W.-D."/>
        </authorList>
    </citation>
    <scope>PROTEIN SEQUENCE</scope>
    <scope>FUNCTION</scope>
    <scope>PYROGLUTAMATE FORMATION AT GLN-1</scope>
    <scope>SUBCELLULAR LOCATION</scope>
    <source>
        <tissue>Venom</tissue>
    </source>
</reference>
<keyword id="KW-0903">Direct protein sequencing</keyword>
<keyword id="KW-0382">Hypotensive agent</keyword>
<keyword id="KW-0481">Metalloenzyme inhibitor</keyword>
<keyword id="KW-0483">Metalloprotease inhibitor</keyword>
<keyword id="KW-0646">Protease inhibitor</keyword>
<keyword id="KW-0873">Pyrrolidone carboxylic acid</keyword>
<keyword id="KW-0964">Secreted</keyword>
<keyword id="KW-0800">Toxin</keyword>
<comment type="function">
    <text evidence="1">This peptide both inhibits the activity of the angiotensin-converting enzyme (ACE) and enhances the action of bradykinin by inhibiting the peptidases that inactivate it. It acts as an indirect hypotensive agent.</text>
</comment>
<comment type="subcellular location">
    <subcellularLocation>
        <location evidence="1">Secreted</location>
    </subcellularLocation>
</comment>
<comment type="tissue specificity">
    <text>Expressed by the venom gland.</text>
</comment>
<comment type="similarity">
    <text evidence="2">Belongs to the bradykinin-potentiating peptide family.</text>
</comment>
<evidence type="ECO:0000269" key="1">
    <source>
    </source>
</evidence>
<evidence type="ECO:0000305" key="2"/>